<name>NDK_FRATF</name>
<organism>
    <name type="scientific">Francisella tularensis subsp. holarctica (strain FTNF002-00 / FTA)</name>
    <dbReference type="NCBI Taxonomy" id="458234"/>
    <lineage>
        <taxon>Bacteria</taxon>
        <taxon>Pseudomonadati</taxon>
        <taxon>Pseudomonadota</taxon>
        <taxon>Gammaproteobacteria</taxon>
        <taxon>Thiotrichales</taxon>
        <taxon>Francisellaceae</taxon>
        <taxon>Francisella</taxon>
    </lineage>
</organism>
<sequence>MTKQRTLSIIKPDAVEKNVIGEIYSRFEKAGLRIIAAKMKHLSKAEAEGFYAVHKDRPFFSALVEFMISGPVMIQVLEGENAIAKNRELMGATNPKEAKAGTIRADFADSIDANAVHGSDAEDTAAQEIRYFFSDTEIFG</sequence>
<evidence type="ECO:0000255" key="1">
    <source>
        <dbReference type="HAMAP-Rule" id="MF_00451"/>
    </source>
</evidence>
<comment type="function">
    <text evidence="1">Major role in the synthesis of nucleoside triphosphates other than ATP. The ATP gamma phosphate is transferred to the NDP beta phosphate via a ping-pong mechanism, using a phosphorylated active-site intermediate.</text>
</comment>
<comment type="catalytic activity">
    <reaction evidence="1">
        <text>a 2'-deoxyribonucleoside 5'-diphosphate + ATP = a 2'-deoxyribonucleoside 5'-triphosphate + ADP</text>
        <dbReference type="Rhea" id="RHEA:44640"/>
        <dbReference type="ChEBI" id="CHEBI:30616"/>
        <dbReference type="ChEBI" id="CHEBI:61560"/>
        <dbReference type="ChEBI" id="CHEBI:73316"/>
        <dbReference type="ChEBI" id="CHEBI:456216"/>
        <dbReference type="EC" id="2.7.4.6"/>
    </reaction>
</comment>
<comment type="catalytic activity">
    <reaction evidence="1">
        <text>a ribonucleoside 5'-diphosphate + ATP = a ribonucleoside 5'-triphosphate + ADP</text>
        <dbReference type="Rhea" id="RHEA:18113"/>
        <dbReference type="ChEBI" id="CHEBI:30616"/>
        <dbReference type="ChEBI" id="CHEBI:57930"/>
        <dbReference type="ChEBI" id="CHEBI:61557"/>
        <dbReference type="ChEBI" id="CHEBI:456216"/>
        <dbReference type="EC" id="2.7.4.6"/>
    </reaction>
</comment>
<comment type="cofactor">
    <cofactor evidence="1">
        <name>Mg(2+)</name>
        <dbReference type="ChEBI" id="CHEBI:18420"/>
    </cofactor>
</comment>
<comment type="subunit">
    <text evidence="1">Homotetramer.</text>
</comment>
<comment type="subcellular location">
    <subcellularLocation>
        <location evidence="1">Cytoplasm</location>
    </subcellularLocation>
</comment>
<comment type="similarity">
    <text evidence="1">Belongs to the NDK family.</text>
</comment>
<feature type="chain" id="PRO_1000026235" description="Nucleoside diphosphate kinase">
    <location>
        <begin position="1"/>
        <end position="140"/>
    </location>
</feature>
<feature type="active site" description="Pros-phosphohistidine intermediate" evidence="1">
    <location>
        <position position="117"/>
    </location>
</feature>
<feature type="binding site" evidence="1">
    <location>
        <position position="11"/>
    </location>
    <ligand>
        <name>ATP</name>
        <dbReference type="ChEBI" id="CHEBI:30616"/>
    </ligand>
</feature>
<feature type="binding site" evidence="1">
    <location>
        <position position="59"/>
    </location>
    <ligand>
        <name>ATP</name>
        <dbReference type="ChEBI" id="CHEBI:30616"/>
    </ligand>
</feature>
<feature type="binding site" evidence="1">
    <location>
        <position position="87"/>
    </location>
    <ligand>
        <name>ATP</name>
        <dbReference type="ChEBI" id="CHEBI:30616"/>
    </ligand>
</feature>
<feature type="binding site" evidence="1">
    <location>
        <position position="93"/>
    </location>
    <ligand>
        <name>ATP</name>
        <dbReference type="ChEBI" id="CHEBI:30616"/>
    </ligand>
</feature>
<feature type="binding site" evidence="1">
    <location>
        <position position="104"/>
    </location>
    <ligand>
        <name>ATP</name>
        <dbReference type="ChEBI" id="CHEBI:30616"/>
    </ligand>
</feature>
<feature type="binding site" evidence="1">
    <location>
        <position position="114"/>
    </location>
    <ligand>
        <name>ATP</name>
        <dbReference type="ChEBI" id="CHEBI:30616"/>
    </ligand>
</feature>
<keyword id="KW-0067">ATP-binding</keyword>
<keyword id="KW-0963">Cytoplasm</keyword>
<keyword id="KW-0418">Kinase</keyword>
<keyword id="KW-0460">Magnesium</keyword>
<keyword id="KW-0479">Metal-binding</keyword>
<keyword id="KW-0546">Nucleotide metabolism</keyword>
<keyword id="KW-0547">Nucleotide-binding</keyword>
<keyword id="KW-0597">Phosphoprotein</keyword>
<keyword id="KW-0808">Transferase</keyword>
<dbReference type="EC" id="2.7.4.6" evidence="1"/>
<dbReference type="EMBL" id="CP000803">
    <property type="protein sequence ID" value="ABU61860.1"/>
    <property type="molecule type" value="Genomic_DNA"/>
</dbReference>
<dbReference type="RefSeq" id="WP_003016495.1">
    <property type="nucleotide sequence ID" value="NC_009749.1"/>
</dbReference>
<dbReference type="SMR" id="A7ND07"/>
<dbReference type="GeneID" id="75264230"/>
<dbReference type="KEGG" id="fta:FTA_1385"/>
<dbReference type="HOGENOM" id="CLU_060216_8_1_6"/>
<dbReference type="GO" id="GO:0005737">
    <property type="term" value="C:cytoplasm"/>
    <property type="evidence" value="ECO:0007669"/>
    <property type="project" value="UniProtKB-SubCell"/>
</dbReference>
<dbReference type="GO" id="GO:0005524">
    <property type="term" value="F:ATP binding"/>
    <property type="evidence" value="ECO:0007669"/>
    <property type="project" value="UniProtKB-UniRule"/>
</dbReference>
<dbReference type="GO" id="GO:0046872">
    <property type="term" value="F:metal ion binding"/>
    <property type="evidence" value="ECO:0007669"/>
    <property type="project" value="UniProtKB-KW"/>
</dbReference>
<dbReference type="GO" id="GO:0004550">
    <property type="term" value="F:nucleoside diphosphate kinase activity"/>
    <property type="evidence" value="ECO:0007669"/>
    <property type="project" value="UniProtKB-UniRule"/>
</dbReference>
<dbReference type="GO" id="GO:0006241">
    <property type="term" value="P:CTP biosynthetic process"/>
    <property type="evidence" value="ECO:0007669"/>
    <property type="project" value="UniProtKB-UniRule"/>
</dbReference>
<dbReference type="GO" id="GO:0006183">
    <property type="term" value="P:GTP biosynthetic process"/>
    <property type="evidence" value="ECO:0007669"/>
    <property type="project" value="UniProtKB-UniRule"/>
</dbReference>
<dbReference type="GO" id="GO:0006228">
    <property type="term" value="P:UTP biosynthetic process"/>
    <property type="evidence" value="ECO:0007669"/>
    <property type="project" value="UniProtKB-UniRule"/>
</dbReference>
<dbReference type="CDD" id="cd04413">
    <property type="entry name" value="NDPk_I"/>
    <property type="match status" value="1"/>
</dbReference>
<dbReference type="FunFam" id="3.30.70.141:FF:000001">
    <property type="entry name" value="Nucleoside diphosphate kinase"/>
    <property type="match status" value="1"/>
</dbReference>
<dbReference type="Gene3D" id="3.30.70.141">
    <property type="entry name" value="Nucleoside diphosphate kinase-like domain"/>
    <property type="match status" value="1"/>
</dbReference>
<dbReference type="HAMAP" id="MF_00451">
    <property type="entry name" value="NDP_kinase"/>
    <property type="match status" value="1"/>
</dbReference>
<dbReference type="InterPro" id="IPR034907">
    <property type="entry name" value="NDK-like_dom"/>
</dbReference>
<dbReference type="InterPro" id="IPR036850">
    <property type="entry name" value="NDK-like_dom_sf"/>
</dbReference>
<dbReference type="InterPro" id="IPR001564">
    <property type="entry name" value="Nucleoside_diP_kinase"/>
</dbReference>
<dbReference type="InterPro" id="IPR023005">
    <property type="entry name" value="Nucleoside_diP_kinase_AS"/>
</dbReference>
<dbReference type="NCBIfam" id="NF001908">
    <property type="entry name" value="PRK00668.1"/>
    <property type="match status" value="1"/>
</dbReference>
<dbReference type="PANTHER" id="PTHR46161">
    <property type="entry name" value="NUCLEOSIDE DIPHOSPHATE KINASE"/>
    <property type="match status" value="1"/>
</dbReference>
<dbReference type="PANTHER" id="PTHR46161:SF3">
    <property type="entry name" value="NUCLEOSIDE DIPHOSPHATE KINASE DDB_G0292928-RELATED"/>
    <property type="match status" value="1"/>
</dbReference>
<dbReference type="Pfam" id="PF00334">
    <property type="entry name" value="NDK"/>
    <property type="match status" value="1"/>
</dbReference>
<dbReference type="PRINTS" id="PR01243">
    <property type="entry name" value="NUCDPKINASE"/>
</dbReference>
<dbReference type="SMART" id="SM00562">
    <property type="entry name" value="NDK"/>
    <property type="match status" value="1"/>
</dbReference>
<dbReference type="SUPFAM" id="SSF54919">
    <property type="entry name" value="Nucleoside diphosphate kinase, NDK"/>
    <property type="match status" value="1"/>
</dbReference>
<dbReference type="PROSITE" id="PS00469">
    <property type="entry name" value="NDPK"/>
    <property type="match status" value="1"/>
</dbReference>
<dbReference type="PROSITE" id="PS51374">
    <property type="entry name" value="NDPK_LIKE"/>
    <property type="match status" value="1"/>
</dbReference>
<reference key="1">
    <citation type="journal article" date="2009" name="PLoS ONE">
        <title>Complete genome sequence of Francisella tularensis subspecies holarctica FTNF002-00.</title>
        <authorList>
            <person name="Barabote R.D."/>
            <person name="Xie G."/>
            <person name="Brettin T.S."/>
            <person name="Hinrichs S.H."/>
            <person name="Fey P.D."/>
            <person name="Jay J.J."/>
            <person name="Engle J.L."/>
            <person name="Godbole S.D."/>
            <person name="Noronha J.M."/>
            <person name="Scheuermann R.H."/>
            <person name="Zhou L.W."/>
            <person name="Lion C."/>
            <person name="Dempsey M.P."/>
        </authorList>
    </citation>
    <scope>NUCLEOTIDE SEQUENCE [LARGE SCALE GENOMIC DNA]</scope>
    <source>
        <strain>FTNF002-00 / FTA</strain>
    </source>
</reference>
<accession>A7ND07</accession>
<proteinExistence type="inferred from homology"/>
<protein>
    <recommendedName>
        <fullName evidence="1">Nucleoside diphosphate kinase</fullName>
        <shortName evidence="1">NDK</shortName>
        <shortName evidence="1">NDP kinase</shortName>
        <ecNumber evidence="1">2.7.4.6</ecNumber>
    </recommendedName>
    <alternativeName>
        <fullName evidence="1">Nucleoside-2-P kinase</fullName>
    </alternativeName>
</protein>
<gene>
    <name evidence="1" type="primary">ndk</name>
    <name type="ordered locus">FTA_1385</name>
</gene>